<comment type="function">
    <text evidence="3">Lignin degradation and detoxification of lignin-derived products. Demethylates eucalyptus hard wood lignin. Has high activity against the non-phenolic heterocyclic compound ABTS, and lower activity against the phenolic substrates syringic acid, caffeic acid, syringaldazine, vanillic acid, catechol and levodihydroxyphenylalanine.</text>
</comment>
<comment type="catalytic activity">
    <reaction evidence="3">
        <text>4 hydroquinone + O2 = 4 benzosemiquinone + 2 H2O</text>
        <dbReference type="Rhea" id="RHEA:11276"/>
        <dbReference type="ChEBI" id="CHEBI:15377"/>
        <dbReference type="ChEBI" id="CHEBI:15379"/>
        <dbReference type="ChEBI" id="CHEBI:17594"/>
        <dbReference type="ChEBI" id="CHEBI:17977"/>
        <dbReference type="EC" id="1.10.3.2"/>
    </reaction>
</comment>
<comment type="cofactor">
    <cofactor evidence="1 3">
        <name>Cu cation</name>
        <dbReference type="ChEBI" id="CHEBI:23378"/>
    </cofactor>
    <text evidence="1 3">Binds 4 Cu cations per monomer.</text>
</comment>
<comment type="activity regulation">
    <text evidence="3">Strongly inhibited by sodium azide, sodium cyanide, Li(+), Sn(+), Hg(2+), and the disulfide-reducing agents beta-mercaptoethanol, dithiothreitol and thioglycolic acid. Moderately inhibited by Mn(2+) and Fe(2+), inhibition by these metal ions is stronger at 0.1 mM than at 1 mM. Moderately inhibited by Cu(2+).</text>
</comment>
<comment type="biophysicochemical properties">
    <kinetics>
        <KM evidence="3">14 uM for ABTS</KM>
        <KM evidence="3">0.8 uM for syringaldazine</KM>
    </kinetics>
    <phDependence>
        <text evidence="3">Optimum pH is 3.0 with ABTS as substrate, activity decreases sharply as pH increases, and no activity is seen at pH 7.0. Optimum pH is 4.0 with syringic acid as substrate, 5.0 with caffeic acid, syringaldazine, vanillic acid or catechol as substrate, and 6.0 with levodihydroxyphenylalanine as substrate. Inactive after 3 hours incubation at pH 2.0, retains 20% of its activity after 24 hours at pH 3.0 and 90% of its activity after 24 hours at pH 9.0.</text>
    </phDependence>
    <temperatureDependence>
        <text evidence="3">Optimum temperature is 60 degrees Celsius. Shows 50% of its maximal activity at 20 degrees Celsius. Has a half-life of 53 minutes at 50 degrees Celsius, 23 minutes at 60 degrees Celsius, and less than 2 minutes at 70 degrees Celsius.</text>
    </temperatureDependence>
</comment>
<comment type="subcellular location">
    <subcellularLocation>
        <location evidence="3">Secreted</location>
    </subcellularLocation>
</comment>
<comment type="miscellaneous">
    <text evidence="3">On the 2D-gel the determined pI of this protein is: 4, its MW is: 64 kDa.</text>
</comment>
<comment type="similarity">
    <text evidence="2">Belongs to the multicopper oxidase family.</text>
</comment>
<protein>
    <recommendedName>
        <fullName evidence="1 4">Laccase-1</fullName>
        <shortName evidence="4">Lac1</shortName>
        <ecNumber evidence="3">1.10.3.2</ecNumber>
    </recommendedName>
    <alternativeName>
        <fullName evidence="1">Benzenediol:oxygen oxidoreductase 1</fullName>
    </alternativeName>
    <alternativeName>
        <fullName evidence="1">Diphenol oxidase 1</fullName>
    </alternativeName>
    <alternativeName>
        <fullName evidence="1">Urishiol oxidase 1</fullName>
    </alternativeName>
</protein>
<dbReference type="EC" id="1.10.3.2" evidence="3"/>
<dbReference type="SABIO-RK" id="P86351"/>
<dbReference type="GO" id="GO:0005576">
    <property type="term" value="C:extracellular region"/>
    <property type="evidence" value="ECO:0007669"/>
    <property type="project" value="UniProtKB-SubCell"/>
</dbReference>
<dbReference type="GO" id="GO:0052716">
    <property type="term" value="F:hydroquinone:oxygen oxidoreductase activity"/>
    <property type="evidence" value="ECO:0007669"/>
    <property type="project" value="UniProtKB-EC"/>
</dbReference>
<dbReference type="GO" id="GO:0046872">
    <property type="term" value="F:metal ion binding"/>
    <property type="evidence" value="ECO:0007669"/>
    <property type="project" value="UniProtKB-KW"/>
</dbReference>
<dbReference type="GO" id="GO:0046274">
    <property type="term" value="P:lignin catabolic process"/>
    <property type="evidence" value="ECO:0007669"/>
    <property type="project" value="UniProtKB-KW"/>
</dbReference>
<reference evidence="5" key="1">
    <citation type="journal article" date="2010" name="Process Biochem.">
        <title>Blue laccase from Galerina sp.: properties and potential for Kraft lignin demethylation.</title>
        <authorList>
            <person name="Ibrahim V."/>
            <person name="Mendoza L."/>
            <person name="Mamo G."/>
            <person name="Hatti-Kaul R."/>
        </authorList>
    </citation>
    <scope>PROTEIN SEQUENCE</scope>
    <scope>FUNCTION</scope>
    <scope>CATALYTIC ACTIVITY</scope>
    <scope>COFACTOR</scope>
    <scope>ACTIVITY REGULATION</scope>
    <scope>BIOPHYSICOCHEMICAL PROPERTIES</scope>
    <scope>SUBCELLULAR LOCATION</scope>
    <source>
        <strain evidence="3">HC1 / DSM 22662</strain>
    </source>
</reference>
<name>LAC1_GALSP</name>
<organism>
    <name type="scientific">Galerina sp</name>
    <dbReference type="NCBI Taxonomy" id="671179"/>
    <lineage>
        <taxon>Eukaryota</taxon>
        <taxon>Fungi</taxon>
        <taxon>Dikarya</taxon>
        <taxon>Basidiomycota</taxon>
        <taxon>Agaricomycotina</taxon>
        <taxon>Agaricomycetes</taxon>
        <taxon>Agaricomycetidae</taxon>
        <taxon>Agaricales</taxon>
        <taxon>Agaricineae</taxon>
        <taxon>Strophariaceae</taxon>
        <taxon>Galerina</taxon>
    </lineage>
</organism>
<keyword id="KW-0186">Copper</keyword>
<keyword id="KW-0903">Direct protein sequencing</keyword>
<keyword id="KW-0439">Lignin degradation</keyword>
<keyword id="KW-0479">Metal-binding</keyword>
<keyword id="KW-0560">Oxidoreductase</keyword>
<keyword id="KW-0964">Secreted</keyword>
<sequence length="23" mass="2303">GPSTDLVIGNKGFDGGIDSAILR</sequence>
<evidence type="ECO:0000250" key="1">
    <source>
        <dbReference type="UniProtKB" id="Q12718"/>
    </source>
</evidence>
<evidence type="ECO:0000255" key="2"/>
<evidence type="ECO:0000269" key="3">
    <source ref="1"/>
</evidence>
<evidence type="ECO:0000303" key="4">
    <source ref="1"/>
</evidence>
<evidence type="ECO:0000305" key="5"/>
<accession>P86351</accession>
<proteinExistence type="evidence at protein level"/>
<feature type="chain" id="PRO_0000399056" description="Laccase-1">
    <location>
        <begin position="1" status="less than"/>
        <end position="23" status="greater than"/>
    </location>
</feature>
<feature type="non-consecutive residues" evidence="4">
    <location>
        <begin position="11"/>
        <end position="12"/>
    </location>
</feature>
<feature type="non-terminal residue" evidence="4">
    <location>
        <position position="1"/>
    </location>
</feature>
<feature type="non-terminal residue" evidence="4">
    <location>
        <position position="23"/>
    </location>
</feature>